<protein>
    <recommendedName>
        <fullName evidence="1">Lipoprotein signal peptidase</fullName>
        <ecNumber evidence="1">3.4.23.36</ecNumber>
    </recommendedName>
    <alternativeName>
        <fullName evidence="1">Prolipoprotein signal peptidase</fullName>
    </alternativeName>
    <alternativeName>
        <fullName evidence="1">Signal peptidase II</fullName>
        <shortName evidence="1">SPase II</shortName>
    </alternativeName>
</protein>
<sequence>MTPFRAGLLALVLTLILDQATKLGLYFGTDLVLTQPWRLAPFADFVVVWNRGVSYGLFQQEGGIGRWLLVALSLAAAIGLGLWMRRATSRLLGIALGLIVGGALGNAIDRAAYGAVFDFVHLHAGGWSWYVFNVADAAIVAGVIGLILDSLSPDGRKDRASPARGDPAPRL</sequence>
<comment type="function">
    <text evidence="1">This protein specifically catalyzes the removal of signal peptides from prolipoproteins.</text>
</comment>
<comment type="catalytic activity">
    <reaction evidence="1">
        <text>Release of signal peptides from bacterial membrane prolipoproteins. Hydrolyzes -Xaa-Yaa-Zaa-|-(S,diacylglyceryl)Cys-, in which Xaa is hydrophobic (preferably Leu), and Yaa (Ala or Ser) and Zaa (Gly or Ala) have small, neutral side chains.</text>
        <dbReference type="EC" id="3.4.23.36"/>
    </reaction>
</comment>
<comment type="pathway">
    <text evidence="1">Protein modification; lipoprotein biosynthesis (signal peptide cleavage).</text>
</comment>
<comment type="subcellular location">
    <subcellularLocation>
        <location evidence="1">Cell inner membrane</location>
        <topology evidence="1">Multi-pass membrane protein</topology>
    </subcellularLocation>
</comment>
<comment type="similarity">
    <text evidence="1">Belongs to the peptidase A8 family.</text>
</comment>
<feature type="chain" id="PRO_1000097264" description="Lipoprotein signal peptidase">
    <location>
        <begin position="1"/>
        <end position="171"/>
    </location>
</feature>
<feature type="transmembrane region" description="Helical" evidence="1">
    <location>
        <begin position="7"/>
        <end position="27"/>
    </location>
</feature>
<feature type="transmembrane region" description="Helical" evidence="1">
    <location>
        <begin position="64"/>
        <end position="84"/>
    </location>
</feature>
<feature type="transmembrane region" description="Helical" evidence="1">
    <location>
        <begin position="88"/>
        <end position="108"/>
    </location>
</feature>
<feature type="transmembrane region" description="Helical" evidence="1">
    <location>
        <begin position="128"/>
        <end position="148"/>
    </location>
</feature>
<feature type="active site" evidence="1">
    <location>
        <position position="118"/>
    </location>
</feature>
<feature type="active site" evidence="1">
    <location>
        <position position="136"/>
    </location>
</feature>
<proteinExistence type="inferred from homology"/>
<organism>
    <name type="scientific">Methylobacterium radiotolerans (strain ATCC 27329 / DSM 1819 / JCM 2831 / NBRC 15690 / NCIMB 10815 / 0-1)</name>
    <dbReference type="NCBI Taxonomy" id="426355"/>
    <lineage>
        <taxon>Bacteria</taxon>
        <taxon>Pseudomonadati</taxon>
        <taxon>Pseudomonadota</taxon>
        <taxon>Alphaproteobacteria</taxon>
        <taxon>Hyphomicrobiales</taxon>
        <taxon>Methylobacteriaceae</taxon>
        <taxon>Methylobacterium</taxon>
    </lineage>
</organism>
<evidence type="ECO:0000255" key="1">
    <source>
        <dbReference type="HAMAP-Rule" id="MF_00161"/>
    </source>
</evidence>
<accession>B1LSB3</accession>
<name>LSPA_METRJ</name>
<keyword id="KW-0064">Aspartyl protease</keyword>
<keyword id="KW-0997">Cell inner membrane</keyword>
<keyword id="KW-1003">Cell membrane</keyword>
<keyword id="KW-0378">Hydrolase</keyword>
<keyword id="KW-0472">Membrane</keyword>
<keyword id="KW-0645">Protease</keyword>
<keyword id="KW-0812">Transmembrane</keyword>
<keyword id="KW-1133">Transmembrane helix</keyword>
<reference key="1">
    <citation type="submission" date="2008-03" db="EMBL/GenBank/DDBJ databases">
        <title>Complete sequence of chromosome of Methylobacterium radiotolerans JCM 2831.</title>
        <authorList>
            <consortium name="US DOE Joint Genome Institute"/>
            <person name="Copeland A."/>
            <person name="Lucas S."/>
            <person name="Lapidus A."/>
            <person name="Glavina del Rio T."/>
            <person name="Dalin E."/>
            <person name="Tice H."/>
            <person name="Bruce D."/>
            <person name="Goodwin L."/>
            <person name="Pitluck S."/>
            <person name="Kiss H."/>
            <person name="Brettin T."/>
            <person name="Detter J.C."/>
            <person name="Han C."/>
            <person name="Kuske C.R."/>
            <person name="Schmutz J."/>
            <person name="Larimer F."/>
            <person name="Land M."/>
            <person name="Hauser L."/>
            <person name="Kyrpides N."/>
            <person name="Mikhailova N."/>
            <person name="Marx C.J."/>
            <person name="Richardson P."/>
        </authorList>
    </citation>
    <scope>NUCLEOTIDE SEQUENCE [LARGE SCALE GENOMIC DNA]</scope>
    <source>
        <strain>ATCC 27329 / DSM 1819 / JCM 2831 / NBRC 15690 / NCIMB 10815 / 0-1</strain>
    </source>
</reference>
<gene>
    <name evidence="1" type="primary">lspA</name>
    <name type="ordered locus">Mrad2831_1799</name>
</gene>
<dbReference type="EC" id="3.4.23.36" evidence="1"/>
<dbReference type="EMBL" id="CP001001">
    <property type="protein sequence ID" value="ACB23794.1"/>
    <property type="molecule type" value="Genomic_DNA"/>
</dbReference>
<dbReference type="RefSeq" id="WP_012318780.1">
    <property type="nucleotide sequence ID" value="NC_010505.1"/>
</dbReference>
<dbReference type="SMR" id="B1LSB3"/>
<dbReference type="STRING" id="426355.Mrad2831_1799"/>
<dbReference type="GeneID" id="6137828"/>
<dbReference type="KEGG" id="mrd:Mrad2831_1799"/>
<dbReference type="eggNOG" id="COG0597">
    <property type="taxonomic scope" value="Bacteria"/>
</dbReference>
<dbReference type="HOGENOM" id="CLU_083252_4_3_5"/>
<dbReference type="OrthoDB" id="9810259at2"/>
<dbReference type="UniPathway" id="UPA00665"/>
<dbReference type="Proteomes" id="UP000006589">
    <property type="component" value="Chromosome"/>
</dbReference>
<dbReference type="GO" id="GO:0005886">
    <property type="term" value="C:plasma membrane"/>
    <property type="evidence" value="ECO:0007669"/>
    <property type="project" value="UniProtKB-SubCell"/>
</dbReference>
<dbReference type="GO" id="GO:0004190">
    <property type="term" value="F:aspartic-type endopeptidase activity"/>
    <property type="evidence" value="ECO:0007669"/>
    <property type="project" value="UniProtKB-UniRule"/>
</dbReference>
<dbReference type="GO" id="GO:0006508">
    <property type="term" value="P:proteolysis"/>
    <property type="evidence" value="ECO:0007669"/>
    <property type="project" value="UniProtKB-KW"/>
</dbReference>
<dbReference type="HAMAP" id="MF_00161">
    <property type="entry name" value="LspA"/>
    <property type="match status" value="1"/>
</dbReference>
<dbReference type="InterPro" id="IPR001872">
    <property type="entry name" value="Peptidase_A8"/>
</dbReference>
<dbReference type="NCBIfam" id="TIGR00077">
    <property type="entry name" value="lspA"/>
    <property type="match status" value="1"/>
</dbReference>
<dbReference type="PANTHER" id="PTHR33695">
    <property type="entry name" value="LIPOPROTEIN SIGNAL PEPTIDASE"/>
    <property type="match status" value="1"/>
</dbReference>
<dbReference type="PANTHER" id="PTHR33695:SF1">
    <property type="entry name" value="LIPOPROTEIN SIGNAL PEPTIDASE"/>
    <property type="match status" value="1"/>
</dbReference>
<dbReference type="Pfam" id="PF01252">
    <property type="entry name" value="Peptidase_A8"/>
    <property type="match status" value="1"/>
</dbReference>
<dbReference type="PRINTS" id="PR00781">
    <property type="entry name" value="LIPOSIGPTASE"/>
</dbReference>
<dbReference type="PROSITE" id="PS00855">
    <property type="entry name" value="SPASE_II"/>
    <property type="match status" value="1"/>
</dbReference>